<evidence type="ECO:0000255" key="1">
    <source>
        <dbReference type="HAMAP-Rule" id="MF_00377"/>
    </source>
</evidence>
<evidence type="ECO:0000305" key="2"/>
<dbReference type="EMBL" id="AE001363">
    <property type="protein sequence ID" value="AAD18568.1"/>
    <property type="molecule type" value="Genomic_DNA"/>
</dbReference>
<dbReference type="EMBL" id="AE002161">
    <property type="protein sequence ID" value="AAF38184.1"/>
    <property type="status" value="ALT_INIT"/>
    <property type="molecule type" value="Genomic_DNA"/>
</dbReference>
<dbReference type="EMBL" id="BA000008">
    <property type="protein sequence ID" value="BAA98632.1"/>
    <property type="molecule type" value="Genomic_DNA"/>
</dbReference>
<dbReference type="EMBL" id="AE009440">
    <property type="protein sequence ID" value="AAP98371.1"/>
    <property type="molecule type" value="Genomic_DNA"/>
</dbReference>
<dbReference type="PIR" id="A81590">
    <property type="entry name" value="A81590"/>
</dbReference>
<dbReference type="PIR" id="B72081">
    <property type="entry name" value="B72081"/>
</dbReference>
<dbReference type="PIR" id="F86543">
    <property type="entry name" value="F86543"/>
</dbReference>
<dbReference type="RefSeq" id="NP_224624.1">
    <property type="nucleotide sequence ID" value="NC_000922.1"/>
</dbReference>
<dbReference type="SMR" id="Q9Z8B9"/>
<dbReference type="STRING" id="406984.CPK_ORF00936"/>
<dbReference type="GeneID" id="45050471"/>
<dbReference type="KEGG" id="cpa:CP_0329"/>
<dbReference type="KEGG" id="cpj:dnaA_2"/>
<dbReference type="KEGG" id="cpn:CPn_0424"/>
<dbReference type="KEGG" id="cpt:CpB0440"/>
<dbReference type="PATRIC" id="fig|115713.3.peg.471"/>
<dbReference type="eggNOG" id="COG0593">
    <property type="taxonomic scope" value="Bacteria"/>
</dbReference>
<dbReference type="HOGENOM" id="CLU_026910_3_1_0"/>
<dbReference type="OMA" id="DIAFFYA"/>
<dbReference type="OrthoDB" id="9807019at2"/>
<dbReference type="Proteomes" id="UP000000583">
    <property type="component" value="Chromosome"/>
</dbReference>
<dbReference type="Proteomes" id="UP000000801">
    <property type="component" value="Chromosome"/>
</dbReference>
<dbReference type="GO" id="GO:0005737">
    <property type="term" value="C:cytoplasm"/>
    <property type="evidence" value="ECO:0007669"/>
    <property type="project" value="UniProtKB-SubCell"/>
</dbReference>
<dbReference type="GO" id="GO:0005886">
    <property type="term" value="C:plasma membrane"/>
    <property type="evidence" value="ECO:0007669"/>
    <property type="project" value="TreeGrafter"/>
</dbReference>
<dbReference type="GO" id="GO:0005524">
    <property type="term" value="F:ATP binding"/>
    <property type="evidence" value="ECO:0007669"/>
    <property type="project" value="UniProtKB-UniRule"/>
</dbReference>
<dbReference type="GO" id="GO:0016887">
    <property type="term" value="F:ATP hydrolysis activity"/>
    <property type="evidence" value="ECO:0007669"/>
    <property type="project" value="InterPro"/>
</dbReference>
<dbReference type="GO" id="GO:0003688">
    <property type="term" value="F:DNA replication origin binding"/>
    <property type="evidence" value="ECO:0007669"/>
    <property type="project" value="UniProtKB-UniRule"/>
</dbReference>
<dbReference type="GO" id="GO:0008289">
    <property type="term" value="F:lipid binding"/>
    <property type="evidence" value="ECO:0007669"/>
    <property type="project" value="UniProtKB-KW"/>
</dbReference>
<dbReference type="GO" id="GO:0006270">
    <property type="term" value="P:DNA replication initiation"/>
    <property type="evidence" value="ECO:0007669"/>
    <property type="project" value="UniProtKB-UniRule"/>
</dbReference>
<dbReference type="GO" id="GO:0006275">
    <property type="term" value="P:regulation of DNA replication"/>
    <property type="evidence" value="ECO:0007669"/>
    <property type="project" value="UniProtKB-UniRule"/>
</dbReference>
<dbReference type="CDD" id="cd00009">
    <property type="entry name" value="AAA"/>
    <property type="match status" value="1"/>
</dbReference>
<dbReference type="CDD" id="cd06571">
    <property type="entry name" value="Bac_DnaA_C"/>
    <property type="match status" value="1"/>
</dbReference>
<dbReference type="FunFam" id="1.10.8.60:FF:000003">
    <property type="entry name" value="Chromosomal replication initiator protein DnaA"/>
    <property type="match status" value="1"/>
</dbReference>
<dbReference type="FunFam" id="3.40.50.300:FF:000668">
    <property type="entry name" value="Chromosomal replication initiator protein DnaA"/>
    <property type="match status" value="1"/>
</dbReference>
<dbReference type="Gene3D" id="1.10.1750.10">
    <property type="match status" value="1"/>
</dbReference>
<dbReference type="Gene3D" id="1.10.8.60">
    <property type="match status" value="1"/>
</dbReference>
<dbReference type="Gene3D" id="3.30.300.180">
    <property type="match status" value="1"/>
</dbReference>
<dbReference type="Gene3D" id="3.40.50.300">
    <property type="entry name" value="P-loop containing nucleotide triphosphate hydrolases"/>
    <property type="match status" value="1"/>
</dbReference>
<dbReference type="HAMAP" id="MF_00377">
    <property type="entry name" value="DnaA_bact"/>
    <property type="match status" value="1"/>
</dbReference>
<dbReference type="InterPro" id="IPR003593">
    <property type="entry name" value="AAA+_ATPase"/>
</dbReference>
<dbReference type="InterPro" id="IPR001957">
    <property type="entry name" value="Chromosome_initiator_DnaA"/>
</dbReference>
<dbReference type="InterPro" id="IPR020591">
    <property type="entry name" value="Chromosome_initiator_DnaA-like"/>
</dbReference>
<dbReference type="InterPro" id="IPR018312">
    <property type="entry name" value="Chromosome_initiator_DnaA_CS"/>
</dbReference>
<dbReference type="InterPro" id="IPR013159">
    <property type="entry name" value="DnaA_C"/>
</dbReference>
<dbReference type="InterPro" id="IPR013317">
    <property type="entry name" value="DnaA_dom"/>
</dbReference>
<dbReference type="InterPro" id="IPR024633">
    <property type="entry name" value="DnaA_N_dom"/>
</dbReference>
<dbReference type="InterPro" id="IPR038454">
    <property type="entry name" value="DnaA_N_sf"/>
</dbReference>
<dbReference type="InterPro" id="IPR027417">
    <property type="entry name" value="P-loop_NTPase"/>
</dbReference>
<dbReference type="InterPro" id="IPR010921">
    <property type="entry name" value="Trp_repressor/repl_initiator"/>
</dbReference>
<dbReference type="NCBIfam" id="TIGR00362">
    <property type="entry name" value="DnaA"/>
    <property type="match status" value="1"/>
</dbReference>
<dbReference type="PANTHER" id="PTHR30050">
    <property type="entry name" value="CHROMOSOMAL REPLICATION INITIATOR PROTEIN DNAA"/>
    <property type="match status" value="1"/>
</dbReference>
<dbReference type="PANTHER" id="PTHR30050:SF2">
    <property type="entry name" value="CHROMOSOMAL REPLICATION INITIATOR PROTEIN DNAA"/>
    <property type="match status" value="1"/>
</dbReference>
<dbReference type="Pfam" id="PF00308">
    <property type="entry name" value="Bac_DnaA"/>
    <property type="match status" value="1"/>
</dbReference>
<dbReference type="Pfam" id="PF08299">
    <property type="entry name" value="Bac_DnaA_C"/>
    <property type="match status" value="1"/>
</dbReference>
<dbReference type="Pfam" id="PF11638">
    <property type="entry name" value="DnaA_N"/>
    <property type="match status" value="1"/>
</dbReference>
<dbReference type="PRINTS" id="PR00051">
    <property type="entry name" value="DNAA"/>
</dbReference>
<dbReference type="SMART" id="SM00382">
    <property type="entry name" value="AAA"/>
    <property type="match status" value="1"/>
</dbReference>
<dbReference type="SMART" id="SM00760">
    <property type="entry name" value="Bac_DnaA_C"/>
    <property type="match status" value="1"/>
</dbReference>
<dbReference type="SUPFAM" id="SSF52540">
    <property type="entry name" value="P-loop containing nucleoside triphosphate hydrolases"/>
    <property type="match status" value="1"/>
</dbReference>
<dbReference type="SUPFAM" id="SSF48295">
    <property type="entry name" value="TrpR-like"/>
    <property type="match status" value="1"/>
</dbReference>
<dbReference type="PROSITE" id="PS01008">
    <property type="entry name" value="DNAA"/>
    <property type="match status" value="1"/>
</dbReference>
<accession>Q9Z8B9</accession>
<accession>Q9K296</accession>
<gene>
    <name evidence="1" type="primary">dnaA2</name>
    <name type="ordered locus">CPn_0424</name>
    <name type="ordered locus">CP_0329</name>
    <name type="ordered locus">CpB0440</name>
</gene>
<reference key="1">
    <citation type="journal article" date="1999" name="Nat. Genet.">
        <title>Comparative genomes of Chlamydia pneumoniae and C. trachomatis.</title>
        <authorList>
            <person name="Kalman S."/>
            <person name="Mitchell W.P."/>
            <person name="Marathe R."/>
            <person name="Lammel C.J."/>
            <person name="Fan J."/>
            <person name="Hyman R.W."/>
            <person name="Olinger L."/>
            <person name="Grimwood J."/>
            <person name="Davis R.W."/>
            <person name="Stephens R.S."/>
        </authorList>
    </citation>
    <scope>NUCLEOTIDE SEQUENCE [LARGE SCALE GENOMIC DNA]</scope>
    <source>
        <strain>CWL029</strain>
    </source>
</reference>
<reference key="2">
    <citation type="journal article" date="2000" name="Nucleic Acids Res.">
        <title>Genome sequences of Chlamydia trachomatis MoPn and Chlamydia pneumoniae AR39.</title>
        <authorList>
            <person name="Read T.D."/>
            <person name="Brunham R.C."/>
            <person name="Shen C."/>
            <person name="Gill S.R."/>
            <person name="Heidelberg J.F."/>
            <person name="White O."/>
            <person name="Hickey E.K."/>
            <person name="Peterson J.D."/>
            <person name="Utterback T.R."/>
            <person name="Berry K.J."/>
            <person name="Bass S."/>
            <person name="Linher K.D."/>
            <person name="Weidman J.F."/>
            <person name="Khouri H.M."/>
            <person name="Craven B."/>
            <person name="Bowman C."/>
            <person name="Dodson R.J."/>
            <person name="Gwinn M.L."/>
            <person name="Nelson W.C."/>
            <person name="DeBoy R.T."/>
            <person name="Kolonay J.F."/>
            <person name="McClarty G."/>
            <person name="Salzberg S.L."/>
            <person name="Eisen J.A."/>
            <person name="Fraser C.M."/>
        </authorList>
    </citation>
    <scope>NUCLEOTIDE SEQUENCE [LARGE SCALE GENOMIC DNA]</scope>
    <source>
        <strain>AR39</strain>
    </source>
</reference>
<reference key="3">
    <citation type="journal article" date="2000" name="Nucleic Acids Res.">
        <title>Comparison of whole genome sequences of Chlamydia pneumoniae J138 from Japan and CWL029 from USA.</title>
        <authorList>
            <person name="Shirai M."/>
            <person name="Hirakawa H."/>
            <person name="Kimoto M."/>
            <person name="Tabuchi M."/>
            <person name="Kishi F."/>
            <person name="Ouchi K."/>
            <person name="Shiba T."/>
            <person name="Ishii K."/>
            <person name="Hattori M."/>
            <person name="Kuhara S."/>
            <person name="Nakazawa T."/>
        </authorList>
    </citation>
    <scope>NUCLEOTIDE SEQUENCE [LARGE SCALE GENOMIC DNA]</scope>
    <source>
        <strain>J138</strain>
    </source>
</reference>
<reference key="4">
    <citation type="submission" date="2002-05" db="EMBL/GenBank/DDBJ databases">
        <title>The genome sequence of Chlamydia pneumoniae TW183 and comparison with other Chlamydia strains based on whole genome sequence analysis.</title>
        <authorList>
            <person name="Geng M.M."/>
            <person name="Schuhmacher A."/>
            <person name="Muehldorfer I."/>
            <person name="Bensch K.W."/>
            <person name="Schaefer K.P."/>
            <person name="Schneider S."/>
            <person name="Pohl T."/>
            <person name="Essig A."/>
            <person name="Marre R."/>
            <person name="Melchers K."/>
        </authorList>
    </citation>
    <scope>NUCLEOTIDE SEQUENCE [LARGE SCALE GENOMIC DNA]</scope>
    <source>
        <strain>TW-183</strain>
    </source>
</reference>
<name>DNAA2_CHLPN</name>
<comment type="function">
    <text evidence="1">Plays an essential role in the initiation and regulation of chromosomal replication. ATP-DnaA binds to the origin of replication (oriC) to initiate formation of the DNA replication initiation complex once per cell cycle. Binds the DnaA box (a 9 base pair repeat at the origin) and separates the double-stranded (ds)DNA. Forms a right-handed helical filament on oriC DNA; dsDNA binds to the exterior of the filament while single-stranded (ss)DNA is stabiized in the filament's interior. The ATP-DnaA-oriC complex binds and stabilizes one strand of the AT-rich DNA unwinding element (DUE), permitting loading of DNA polymerase. After initiation quickly degrades to an ADP-DnaA complex that is not apt for DNA replication. Binds acidic phospholipids.</text>
</comment>
<comment type="subunit">
    <text evidence="1">Oligomerizes as a right-handed, spiral filament on DNA at oriC.</text>
</comment>
<comment type="subcellular location">
    <subcellularLocation>
        <location evidence="1">Cytoplasm</location>
    </subcellularLocation>
</comment>
<comment type="domain">
    <text evidence="1">Domain I is involved in oligomerization and binding regulators, domain II is flexibile and of varying length in different bacteria, domain III forms the AAA+ region, while domain IV binds dsDNA.</text>
</comment>
<comment type="similarity">
    <text evidence="1">Belongs to the DnaA family.</text>
</comment>
<comment type="sequence caution" evidence="2">
    <conflict type="erroneous initiation">
        <sequence resource="EMBL-CDS" id="AAF38184"/>
    </conflict>
</comment>
<protein>
    <recommendedName>
        <fullName evidence="1">Chromosomal replication initiator protein DnaA 2</fullName>
    </recommendedName>
</protein>
<organism>
    <name type="scientific">Chlamydia pneumoniae</name>
    <name type="common">Chlamydophila pneumoniae</name>
    <dbReference type="NCBI Taxonomy" id="83558"/>
    <lineage>
        <taxon>Bacteria</taxon>
        <taxon>Pseudomonadati</taxon>
        <taxon>Chlamydiota</taxon>
        <taxon>Chlamydiia</taxon>
        <taxon>Chlamydiales</taxon>
        <taxon>Chlamydiaceae</taxon>
        <taxon>Chlamydia/Chlamydophila group</taxon>
        <taxon>Chlamydia</taxon>
    </lineage>
</organism>
<keyword id="KW-0067">ATP-binding</keyword>
<keyword id="KW-0963">Cytoplasm</keyword>
<keyword id="KW-0235">DNA replication</keyword>
<keyword id="KW-0238">DNA-binding</keyword>
<keyword id="KW-0446">Lipid-binding</keyword>
<keyword id="KW-0547">Nucleotide-binding</keyword>
<feature type="chain" id="PRO_0000114160" description="Chromosomal replication initiator protein DnaA 2">
    <location>
        <begin position="1"/>
        <end position="450"/>
    </location>
</feature>
<feature type="region of interest" description="Domain I, interacts with DnaA modulators" evidence="1">
    <location>
        <begin position="1"/>
        <end position="87"/>
    </location>
</feature>
<feature type="region of interest" description="Domain II" evidence="1">
    <location>
        <begin position="87"/>
        <end position="114"/>
    </location>
</feature>
<feature type="region of interest" description="Domain III, AAA+ region" evidence="1">
    <location>
        <begin position="115"/>
        <end position="330"/>
    </location>
</feature>
<feature type="region of interest" description="Domain IV, binds dsDNA" evidence="1">
    <location>
        <begin position="331"/>
        <end position="450"/>
    </location>
</feature>
<feature type="binding site" evidence="1">
    <location>
        <position position="159"/>
    </location>
    <ligand>
        <name>ATP</name>
        <dbReference type="ChEBI" id="CHEBI:30616"/>
    </ligand>
</feature>
<feature type="binding site" evidence="1">
    <location>
        <position position="161"/>
    </location>
    <ligand>
        <name>ATP</name>
        <dbReference type="ChEBI" id="CHEBI:30616"/>
    </ligand>
</feature>
<feature type="binding site" evidence="1">
    <location>
        <position position="162"/>
    </location>
    <ligand>
        <name>ATP</name>
        <dbReference type="ChEBI" id="CHEBI:30616"/>
    </ligand>
</feature>
<feature type="binding site" evidence="1">
    <location>
        <position position="163"/>
    </location>
    <ligand>
        <name>ATP</name>
        <dbReference type="ChEBI" id="CHEBI:30616"/>
    </ligand>
</feature>
<proteinExistence type="inferred from homology"/>
<sequence>MLTCNECTTWEQFLNYVKTRCSKTAFENWISPIQVLEETQEKIRLEVPNIFVQNYLLDNYKRDLCSFVPLDVHGEPALEFVVAEHKKPSAPVASQKESNEGISEVFEETKDFELKLNLSYRFDNFIEGPSNQFVKSAAVGIAGKPGRSYNPLFIHGGVGLGKTHLLHAVGHYVREHHKNLRIHCITTEAFINDLVYHLKSKSVDKMKNFYRSLDLLLVDDIQFLQNRQNFEEEFCNTFETLINLSKQIVITSDKPPSQLKLSERIIARMEWGLVAHVGIPDLETRVAILQHKAEQKGLLIPNEMAFYIADHIYGNVRQLEGAINKLTAYCRLFGKSLTETTVRETLKELFRSPTKQKISVETILKSVATVFQVKLNDLKGNSRSKDLVLARQIAMYLAKTLITDSLVAIGAAFGKTHSTVLYACKTIEHKLQNDETLKRQVNLCKNHIVG</sequence>